<feature type="chain" id="PRO_0000133889" description="Enolase">
    <location>
        <begin position="1"/>
        <end position="434"/>
    </location>
</feature>
<feature type="active site" description="Proton donor" evidence="1">
    <location>
        <position position="205"/>
    </location>
</feature>
<feature type="active site" description="Proton acceptor" evidence="1">
    <location>
        <position position="343"/>
    </location>
</feature>
<feature type="binding site" evidence="1">
    <location>
        <position position="163"/>
    </location>
    <ligand>
        <name>(2R)-2-phosphoglycerate</name>
        <dbReference type="ChEBI" id="CHEBI:58289"/>
    </ligand>
</feature>
<feature type="binding site" evidence="1">
    <location>
        <position position="243"/>
    </location>
    <ligand>
        <name>Mg(2+)</name>
        <dbReference type="ChEBI" id="CHEBI:18420"/>
    </ligand>
</feature>
<feature type="binding site" evidence="1">
    <location>
        <position position="291"/>
    </location>
    <ligand>
        <name>Mg(2+)</name>
        <dbReference type="ChEBI" id="CHEBI:18420"/>
    </ligand>
</feature>
<feature type="binding site" evidence="1">
    <location>
        <position position="318"/>
    </location>
    <ligand>
        <name>Mg(2+)</name>
        <dbReference type="ChEBI" id="CHEBI:18420"/>
    </ligand>
</feature>
<feature type="binding site" evidence="1">
    <location>
        <position position="343"/>
    </location>
    <ligand>
        <name>(2R)-2-phosphoglycerate</name>
        <dbReference type="ChEBI" id="CHEBI:58289"/>
    </ligand>
</feature>
<feature type="binding site" evidence="1">
    <location>
        <position position="372"/>
    </location>
    <ligand>
        <name>(2R)-2-phosphoglycerate</name>
        <dbReference type="ChEBI" id="CHEBI:58289"/>
    </ligand>
</feature>
<feature type="binding site" evidence="1">
    <location>
        <position position="373"/>
    </location>
    <ligand>
        <name>(2R)-2-phosphoglycerate</name>
        <dbReference type="ChEBI" id="CHEBI:58289"/>
    </ligand>
</feature>
<feature type="binding site" evidence="1">
    <location>
        <position position="394"/>
    </location>
    <ligand>
        <name>(2R)-2-phosphoglycerate</name>
        <dbReference type="ChEBI" id="CHEBI:58289"/>
    </ligand>
</feature>
<sequence length="434" mass="46680">MTGIVEVIGREILDSRGNPTVEVDVILECGAKGRAAVPSGASTGSHEAVELRDEDKGRYLGKGVLKAVNNVNTEIREALLGMDALNQVEIDKVMLELDRTPNKGRLGANAILGVSLAVAKAAAEALGQPLYKYLGGVNSKELPLPMMNILNGGAHADSAVDLQEFMIQPVGAKSFREAMQMGAEVFHHLGKILKANGDSTNVGNEGGYAPSKIQGTEGALALISEAVKAAGYELGKDITFALDAASSEFCKEVNGKYEYHFKREGGVVRTTDEMIKWYEELINKYPIVSIEDGLGEDDWDGWVKLTKAIGDRVQIVGDDLFVTNTERLKKGIELGAGNSILIKLNQIGSLTETLDAIEMAKRAGYTAVVSHRSGETEDATIADVAVATNAGQIKTGSTSRTDRMAKYNQLLRIEEELGSVAQYNGRDVFYNIKK</sequence>
<name>ENO_FUSNN</name>
<accession>Q8RI55</accession>
<proteinExistence type="inferred from homology"/>
<protein>
    <recommendedName>
        <fullName evidence="1">Enolase</fullName>
        <ecNumber evidence="1">4.2.1.11</ecNumber>
    </recommendedName>
    <alternativeName>
        <fullName evidence="1">2-phospho-D-glycerate hydro-lyase</fullName>
    </alternativeName>
    <alternativeName>
        <fullName evidence="1">2-phosphoglycerate dehydratase</fullName>
    </alternativeName>
</protein>
<organism>
    <name type="scientific">Fusobacterium nucleatum subsp. nucleatum (strain ATCC 25586 / DSM 15643 / BCRC 10681 / CIP 101130 / JCM 8532 / KCTC 2640 / LMG 13131 / VPI 4355)</name>
    <dbReference type="NCBI Taxonomy" id="190304"/>
    <lineage>
        <taxon>Bacteria</taxon>
        <taxon>Fusobacteriati</taxon>
        <taxon>Fusobacteriota</taxon>
        <taxon>Fusobacteriia</taxon>
        <taxon>Fusobacteriales</taxon>
        <taxon>Fusobacteriaceae</taxon>
        <taxon>Fusobacterium</taxon>
    </lineage>
</organism>
<comment type="function">
    <text evidence="1">Catalyzes the reversible conversion of 2-phosphoglycerate (2-PG) into phosphoenolpyruvate (PEP). It is essential for the degradation of carbohydrates via glycolysis.</text>
</comment>
<comment type="catalytic activity">
    <reaction evidence="1">
        <text>(2R)-2-phosphoglycerate = phosphoenolpyruvate + H2O</text>
        <dbReference type="Rhea" id="RHEA:10164"/>
        <dbReference type="ChEBI" id="CHEBI:15377"/>
        <dbReference type="ChEBI" id="CHEBI:58289"/>
        <dbReference type="ChEBI" id="CHEBI:58702"/>
        <dbReference type="EC" id="4.2.1.11"/>
    </reaction>
</comment>
<comment type="cofactor">
    <cofactor evidence="1">
        <name>Mg(2+)</name>
        <dbReference type="ChEBI" id="CHEBI:18420"/>
    </cofactor>
    <text evidence="1">Binds a second Mg(2+) ion via substrate during catalysis.</text>
</comment>
<comment type="pathway">
    <text evidence="1">Carbohydrate degradation; glycolysis; pyruvate from D-glyceraldehyde 3-phosphate: step 4/5.</text>
</comment>
<comment type="subcellular location">
    <subcellularLocation>
        <location evidence="1">Cytoplasm</location>
    </subcellularLocation>
    <subcellularLocation>
        <location evidence="1">Secreted</location>
    </subcellularLocation>
    <subcellularLocation>
        <location evidence="1">Cell surface</location>
    </subcellularLocation>
    <text evidence="1">Fractions of enolase are present in both the cytoplasm and on the cell surface.</text>
</comment>
<comment type="similarity">
    <text evidence="1">Belongs to the enolase family.</text>
</comment>
<keyword id="KW-0963">Cytoplasm</keyword>
<keyword id="KW-0324">Glycolysis</keyword>
<keyword id="KW-0456">Lyase</keyword>
<keyword id="KW-0460">Magnesium</keyword>
<keyword id="KW-0479">Metal-binding</keyword>
<keyword id="KW-1185">Reference proteome</keyword>
<keyword id="KW-0964">Secreted</keyword>
<reference key="1">
    <citation type="journal article" date="2002" name="J. Bacteriol.">
        <title>Genome sequence and analysis of the oral bacterium Fusobacterium nucleatum strain ATCC 25586.</title>
        <authorList>
            <person name="Kapatral V."/>
            <person name="Anderson I."/>
            <person name="Ivanova N."/>
            <person name="Reznik G."/>
            <person name="Los T."/>
            <person name="Lykidis A."/>
            <person name="Bhattacharyya A."/>
            <person name="Bartman A."/>
            <person name="Gardner W."/>
            <person name="Grechkin G."/>
            <person name="Zhu L."/>
            <person name="Vasieva O."/>
            <person name="Chu L."/>
            <person name="Kogan Y."/>
            <person name="Chaga O."/>
            <person name="Goltsman E."/>
            <person name="Bernal A."/>
            <person name="Larsen N."/>
            <person name="D'Souza M."/>
            <person name="Walunas T."/>
            <person name="Pusch G."/>
            <person name="Haselkorn R."/>
            <person name="Fonstein M."/>
            <person name="Kyrpides N.C."/>
            <person name="Overbeek R."/>
        </authorList>
    </citation>
    <scope>NUCLEOTIDE SEQUENCE [LARGE SCALE GENOMIC DNA]</scope>
    <source>
        <strain>ATCC 25586 / DSM 15643 / BCRC 10681 / CIP 101130 / JCM 8532 / KCTC 2640 / LMG 13131 / VPI 4355</strain>
    </source>
</reference>
<dbReference type="EC" id="4.2.1.11" evidence="1"/>
<dbReference type="EMBL" id="AE009951">
    <property type="protein sequence ID" value="AAL93877.1"/>
    <property type="molecule type" value="Genomic_DNA"/>
</dbReference>
<dbReference type="RefSeq" id="NP_602578.1">
    <property type="nucleotide sequence ID" value="NC_003454.1"/>
</dbReference>
<dbReference type="RefSeq" id="WP_011015819.1">
    <property type="nucleotide sequence ID" value="NZ_OZ209243.1"/>
</dbReference>
<dbReference type="SMR" id="Q8RI55"/>
<dbReference type="FunCoup" id="Q8RI55">
    <property type="interactions" value="262"/>
</dbReference>
<dbReference type="STRING" id="190304.FN1764"/>
<dbReference type="PaxDb" id="190304-FN1764"/>
<dbReference type="EnsemblBacteria" id="AAL93877">
    <property type="protein sequence ID" value="AAL93877"/>
    <property type="gene ID" value="FN1764"/>
</dbReference>
<dbReference type="GeneID" id="79782692"/>
<dbReference type="KEGG" id="fnu:FN1764"/>
<dbReference type="PATRIC" id="fig|190304.8.peg.252"/>
<dbReference type="eggNOG" id="COG0148">
    <property type="taxonomic scope" value="Bacteria"/>
</dbReference>
<dbReference type="HOGENOM" id="CLU_031223_2_1_0"/>
<dbReference type="InParanoid" id="Q8RI55"/>
<dbReference type="BioCyc" id="FNUC190304:G1FZS-262-MONOMER"/>
<dbReference type="UniPathway" id="UPA00109">
    <property type="reaction ID" value="UER00187"/>
</dbReference>
<dbReference type="Proteomes" id="UP000002521">
    <property type="component" value="Chromosome"/>
</dbReference>
<dbReference type="GO" id="GO:0009986">
    <property type="term" value="C:cell surface"/>
    <property type="evidence" value="ECO:0007669"/>
    <property type="project" value="UniProtKB-SubCell"/>
</dbReference>
<dbReference type="GO" id="GO:0005576">
    <property type="term" value="C:extracellular region"/>
    <property type="evidence" value="ECO:0007669"/>
    <property type="project" value="UniProtKB-SubCell"/>
</dbReference>
<dbReference type="GO" id="GO:0000015">
    <property type="term" value="C:phosphopyruvate hydratase complex"/>
    <property type="evidence" value="ECO:0000318"/>
    <property type="project" value="GO_Central"/>
</dbReference>
<dbReference type="GO" id="GO:0000287">
    <property type="term" value="F:magnesium ion binding"/>
    <property type="evidence" value="ECO:0007669"/>
    <property type="project" value="UniProtKB-UniRule"/>
</dbReference>
<dbReference type="GO" id="GO:0004634">
    <property type="term" value="F:phosphopyruvate hydratase activity"/>
    <property type="evidence" value="ECO:0000318"/>
    <property type="project" value="GO_Central"/>
</dbReference>
<dbReference type="GO" id="GO:0006096">
    <property type="term" value="P:glycolytic process"/>
    <property type="evidence" value="ECO:0000318"/>
    <property type="project" value="GO_Central"/>
</dbReference>
<dbReference type="CDD" id="cd03313">
    <property type="entry name" value="enolase"/>
    <property type="match status" value="1"/>
</dbReference>
<dbReference type="FunFam" id="3.20.20.120:FF:000001">
    <property type="entry name" value="Enolase"/>
    <property type="match status" value="1"/>
</dbReference>
<dbReference type="FunFam" id="3.30.390.10:FF:000001">
    <property type="entry name" value="Enolase"/>
    <property type="match status" value="1"/>
</dbReference>
<dbReference type="Gene3D" id="3.20.20.120">
    <property type="entry name" value="Enolase-like C-terminal domain"/>
    <property type="match status" value="1"/>
</dbReference>
<dbReference type="Gene3D" id="3.30.390.10">
    <property type="entry name" value="Enolase-like, N-terminal domain"/>
    <property type="match status" value="1"/>
</dbReference>
<dbReference type="HAMAP" id="MF_00318">
    <property type="entry name" value="Enolase"/>
    <property type="match status" value="1"/>
</dbReference>
<dbReference type="InterPro" id="IPR000941">
    <property type="entry name" value="Enolase"/>
</dbReference>
<dbReference type="InterPro" id="IPR036849">
    <property type="entry name" value="Enolase-like_C_sf"/>
</dbReference>
<dbReference type="InterPro" id="IPR029017">
    <property type="entry name" value="Enolase-like_N"/>
</dbReference>
<dbReference type="InterPro" id="IPR020810">
    <property type="entry name" value="Enolase_C"/>
</dbReference>
<dbReference type="InterPro" id="IPR020809">
    <property type="entry name" value="Enolase_CS"/>
</dbReference>
<dbReference type="InterPro" id="IPR020811">
    <property type="entry name" value="Enolase_N"/>
</dbReference>
<dbReference type="NCBIfam" id="TIGR01060">
    <property type="entry name" value="eno"/>
    <property type="match status" value="1"/>
</dbReference>
<dbReference type="PANTHER" id="PTHR11902">
    <property type="entry name" value="ENOLASE"/>
    <property type="match status" value="1"/>
</dbReference>
<dbReference type="PANTHER" id="PTHR11902:SF1">
    <property type="entry name" value="ENOLASE"/>
    <property type="match status" value="1"/>
</dbReference>
<dbReference type="Pfam" id="PF00113">
    <property type="entry name" value="Enolase_C"/>
    <property type="match status" value="1"/>
</dbReference>
<dbReference type="Pfam" id="PF03952">
    <property type="entry name" value="Enolase_N"/>
    <property type="match status" value="1"/>
</dbReference>
<dbReference type="PIRSF" id="PIRSF001400">
    <property type="entry name" value="Enolase"/>
    <property type="match status" value="1"/>
</dbReference>
<dbReference type="PRINTS" id="PR00148">
    <property type="entry name" value="ENOLASE"/>
</dbReference>
<dbReference type="SFLD" id="SFLDF00002">
    <property type="entry name" value="enolase"/>
    <property type="match status" value="1"/>
</dbReference>
<dbReference type="SFLD" id="SFLDG00178">
    <property type="entry name" value="enolase"/>
    <property type="match status" value="1"/>
</dbReference>
<dbReference type="SMART" id="SM01192">
    <property type="entry name" value="Enolase_C"/>
    <property type="match status" value="1"/>
</dbReference>
<dbReference type="SMART" id="SM01193">
    <property type="entry name" value="Enolase_N"/>
    <property type="match status" value="1"/>
</dbReference>
<dbReference type="SUPFAM" id="SSF51604">
    <property type="entry name" value="Enolase C-terminal domain-like"/>
    <property type="match status" value="1"/>
</dbReference>
<dbReference type="SUPFAM" id="SSF54826">
    <property type="entry name" value="Enolase N-terminal domain-like"/>
    <property type="match status" value="1"/>
</dbReference>
<dbReference type="PROSITE" id="PS00164">
    <property type="entry name" value="ENOLASE"/>
    <property type="match status" value="1"/>
</dbReference>
<evidence type="ECO:0000255" key="1">
    <source>
        <dbReference type="HAMAP-Rule" id="MF_00318"/>
    </source>
</evidence>
<gene>
    <name evidence="1" type="primary">eno</name>
    <name type="ordered locus">FN1764</name>
</gene>